<comment type="function">
    <text evidence="1">Allows the formation of correctly charged Asn-tRNA(Asn) or Gln-tRNA(Gln) through the transamidation of misacylated Asp-tRNA(Asn) or Glu-tRNA(Gln) in organisms which lack either or both of asparaginyl-tRNA or glutaminyl-tRNA synthetases. The reaction takes place in the presence of glutamine and ATP through an activated phospho-Asp-tRNA(Asn) or phospho-Glu-tRNA(Gln).</text>
</comment>
<comment type="catalytic activity">
    <reaction evidence="1">
        <text>L-glutamyl-tRNA(Gln) + L-glutamine + ATP + H2O = L-glutaminyl-tRNA(Gln) + L-glutamate + ADP + phosphate + H(+)</text>
        <dbReference type="Rhea" id="RHEA:17521"/>
        <dbReference type="Rhea" id="RHEA-COMP:9681"/>
        <dbReference type="Rhea" id="RHEA-COMP:9684"/>
        <dbReference type="ChEBI" id="CHEBI:15377"/>
        <dbReference type="ChEBI" id="CHEBI:15378"/>
        <dbReference type="ChEBI" id="CHEBI:29985"/>
        <dbReference type="ChEBI" id="CHEBI:30616"/>
        <dbReference type="ChEBI" id="CHEBI:43474"/>
        <dbReference type="ChEBI" id="CHEBI:58359"/>
        <dbReference type="ChEBI" id="CHEBI:78520"/>
        <dbReference type="ChEBI" id="CHEBI:78521"/>
        <dbReference type="ChEBI" id="CHEBI:456216"/>
    </reaction>
</comment>
<comment type="catalytic activity">
    <reaction evidence="1">
        <text>L-aspartyl-tRNA(Asn) + L-glutamine + ATP + H2O = L-asparaginyl-tRNA(Asn) + L-glutamate + ADP + phosphate + 2 H(+)</text>
        <dbReference type="Rhea" id="RHEA:14513"/>
        <dbReference type="Rhea" id="RHEA-COMP:9674"/>
        <dbReference type="Rhea" id="RHEA-COMP:9677"/>
        <dbReference type="ChEBI" id="CHEBI:15377"/>
        <dbReference type="ChEBI" id="CHEBI:15378"/>
        <dbReference type="ChEBI" id="CHEBI:29985"/>
        <dbReference type="ChEBI" id="CHEBI:30616"/>
        <dbReference type="ChEBI" id="CHEBI:43474"/>
        <dbReference type="ChEBI" id="CHEBI:58359"/>
        <dbReference type="ChEBI" id="CHEBI:78515"/>
        <dbReference type="ChEBI" id="CHEBI:78516"/>
        <dbReference type="ChEBI" id="CHEBI:456216"/>
    </reaction>
</comment>
<comment type="subunit">
    <text evidence="1">Heterotrimer of A, B and C subunits.</text>
</comment>
<comment type="similarity">
    <text evidence="1">Belongs to the GatC family.</text>
</comment>
<organism>
    <name type="scientific">Phenylobacterium zucineum (strain HLK1)</name>
    <dbReference type="NCBI Taxonomy" id="450851"/>
    <lineage>
        <taxon>Bacteria</taxon>
        <taxon>Pseudomonadati</taxon>
        <taxon>Pseudomonadota</taxon>
        <taxon>Alphaproteobacteria</taxon>
        <taxon>Caulobacterales</taxon>
        <taxon>Caulobacteraceae</taxon>
        <taxon>Phenylobacterium</taxon>
    </lineage>
</organism>
<proteinExistence type="inferred from homology"/>
<protein>
    <recommendedName>
        <fullName evidence="1">Aspartyl/glutamyl-tRNA(Asn/Gln) amidotransferase subunit C</fullName>
        <shortName evidence="1">Asp/Glu-ADT subunit C</shortName>
        <ecNumber evidence="1">6.3.5.-</ecNumber>
    </recommendedName>
</protein>
<accession>B4R967</accession>
<keyword id="KW-0067">ATP-binding</keyword>
<keyword id="KW-0436">Ligase</keyword>
<keyword id="KW-0547">Nucleotide-binding</keyword>
<keyword id="KW-0648">Protein biosynthesis</keyword>
<keyword id="KW-1185">Reference proteome</keyword>
<reference key="1">
    <citation type="journal article" date="2008" name="BMC Genomics">
        <title>Complete genome of Phenylobacterium zucineum - a novel facultative intracellular bacterium isolated from human erythroleukemia cell line K562.</title>
        <authorList>
            <person name="Luo Y."/>
            <person name="Xu X."/>
            <person name="Ding Z."/>
            <person name="Liu Z."/>
            <person name="Zhang B."/>
            <person name="Yan Z."/>
            <person name="Sun J."/>
            <person name="Hu S."/>
            <person name="Hu X."/>
        </authorList>
    </citation>
    <scope>NUCLEOTIDE SEQUENCE [LARGE SCALE GENOMIC DNA]</scope>
    <source>
        <strain>HLK1</strain>
    </source>
</reference>
<feature type="chain" id="PRO_1000095305" description="Aspartyl/glutamyl-tRNA(Asn/Gln) amidotransferase subunit C">
    <location>
        <begin position="1"/>
        <end position="95"/>
    </location>
</feature>
<name>GATC_PHEZH</name>
<evidence type="ECO:0000255" key="1">
    <source>
        <dbReference type="HAMAP-Rule" id="MF_00122"/>
    </source>
</evidence>
<sequence>MAIDAATVRKVARLARIAEPEEKLEPLAKELSGILNWIEQLNEVDTDGVEPMTTSVETTLPMRDDVVTEGGDPAKVLANAPKAAKNFFVVPKVVE</sequence>
<dbReference type="EC" id="6.3.5.-" evidence="1"/>
<dbReference type="EMBL" id="CP000747">
    <property type="protein sequence ID" value="ACG77737.1"/>
    <property type="molecule type" value="Genomic_DNA"/>
</dbReference>
<dbReference type="RefSeq" id="WP_012521881.1">
    <property type="nucleotide sequence ID" value="NC_011144.1"/>
</dbReference>
<dbReference type="SMR" id="B4R967"/>
<dbReference type="STRING" id="450851.PHZ_c1323"/>
<dbReference type="KEGG" id="pzu:PHZ_c1323"/>
<dbReference type="eggNOG" id="COG0721">
    <property type="taxonomic scope" value="Bacteria"/>
</dbReference>
<dbReference type="HOGENOM" id="CLU_105899_2_0_5"/>
<dbReference type="OrthoDB" id="9794326at2"/>
<dbReference type="Proteomes" id="UP000001868">
    <property type="component" value="Chromosome"/>
</dbReference>
<dbReference type="GO" id="GO:0050566">
    <property type="term" value="F:asparaginyl-tRNA synthase (glutamine-hydrolyzing) activity"/>
    <property type="evidence" value="ECO:0007669"/>
    <property type="project" value="RHEA"/>
</dbReference>
<dbReference type="GO" id="GO:0005524">
    <property type="term" value="F:ATP binding"/>
    <property type="evidence" value="ECO:0007669"/>
    <property type="project" value="UniProtKB-KW"/>
</dbReference>
<dbReference type="GO" id="GO:0050567">
    <property type="term" value="F:glutaminyl-tRNA synthase (glutamine-hydrolyzing) activity"/>
    <property type="evidence" value="ECO:0007669"/>
    <property type="project" value="UniProtKB-UniRule"/>
</dbReference>
<dbReference type="GO" id="GO:0070681">
    <property type="term" value="P:glutaminyl-tRNAGln biosynthesis via transamidation"/>
    <property type="evidence" value="ECO:0007669"/>
    <property type="project" value="TreeGrafter"/>
</dbReference>
<dbReference type="GO" id="GO:0006450">
    <property type="term" value="P:regulation of translational fidelity"/>
    <property type="evidence" value="ECO:0007669"/>
    <property type="project" value="InterPro"/>
</dbReference>
<dbReference type="GO" id="GO:0006412">
    <property type="term" value="P:translation"/>
    <property type="evidence" value="ECO:0007669"/>
    <property type="project" value="UniProtKB-UniRule"/>
</dbReference>
<dbReference type="Gene3D" id="1.10.20.60">
    <property type="entry name" value="Glu-tRNAGln amidotransferase C subunit, N-terminal domain"/>
    <property type="match status" value="1"/>
</dbReference>
<dbReference type="HAMAP" id="MF_00122">
    <property type="entry name" value="GatC"/>
    <property type="match status" value="1"/>
</dbReference>
<dbReference type="InterPro" id="IPR036113">
    <property type="entry name" value="Asp/Glu-ADT_sf_sub_c"/>
</dbReference>
<dbReference type="InterPro" id="IPR003837">
    <property type="entry name" value="GatC"/>
</dbReference>
<dbReference type="NCBIfam" id="TIGR00135">
    <property type="entry name" value="gatC"/>
    <property type="match status" value="1"/>
</dbReference>
<dbReference type="PANTHER" id="PTHR15004">
    <property type="entry name" value="GLUTAMYL-TRNA(GLN) AMIDOTRANSFERASE SUBUNIT C, MITOCHONDRIAL"/>
    <property type="match status" value="1"/>
</dbReference>
<dbReference type="PANTHER" id="PTHR15004:SF0">
    <property type="entry name" value="GLUTAMYL-TRNA(GLN) AMIDOTRANSFERASE SUBUNIT C, MITOCHONDRIAL"/>
    <property type="match status" value="1"/>
</dbReference>
<dbReference type="Pfam" id="PF02686">
    <property type="entry name" value="GatC"/>
    <property type="match status" value="1"/>
</dbReference>
<dbReference type="SUPFAM" id="SSF141000">
    <property type="entry name" value="Glu-tRNAGln amidotransferase C subunit"/>
    <property type="match status" value="1"/>
</dbReference>
<gene>
    <name evidence="1" type="primary">gatC</name>
    <name type="ordered locus">PHZ_c1323</name>
</gene>